<protein>
    <recommendedName>
        <fullName>Trigger factor</fullName>
        <shortName>TF</shortName>
        <ecNumber>5.2.1.8</ecNumber>
    </recommendedName>
    <alternativeName>
        <fullName>PPIase</fullName>
    </alternativeName>
    <alternativeName>
        <fullName>Vegetative protein 2</fullName>
        <shortName>VEG2</shortName>
    </alternativeName>
</protein>
<keyword id="KW-0131">Cell cycle</keyword>
<keyword id="KW-0132">Cell division</keyword>
<keyword id="KW-0143">Chaperone</keyword>
<keyword id="KW-0963">Cytoplasm</keyword>
<keyword id="KW-0903">Direct protein sequencing</keyword>
<keyword id="KW-0413">Isomerase</keyword>
<keyword id="KW-1185">Reference proteome</keyword>
<keyword id="KW-0697">Rotamase</keyword>
<proteinExistence type="evidence at protein level"/>
<accession>P80698</accession>
<accession>P97173</accession>
<reference key="1">
    <citation type="journal article" date="1997" name="Eur. J. Biochem.">
        <title>An internal FK506-binding domain is the catalytic core of the prolyl isomerase activity associated with the Bacillus subtilis trigger factor.</title>
        <authorList>
            <person name="Goethel S.F."/>
            <person name="Schmid R."/>
            <person name="Wipat A."/>
            <person name="Carter N.M."/>
            <person name="Emmerson P.T."/>
            <person name="Harwood C.R."/>
            <person name="Marahiel M.A."/>
        </authorList>
    </citation>
    <scope>NUCLEOTIDE SEQUENCE [GENOMIC DNA]</scope>
    <scope>PARTIAL PROTEIN SEQUENCE</scope>
    <scope>CHARACTERIZATION</scope>
</reference>
<reference key="2">
    <citation type="journal article" date="1996" name="Microbiology">
        <title>The dnaB-pheA (256 degrees-240 degrees) region of the Bacillus subtilis chromosome containing genes responsible for stress responses, the utilization of plant cell walls and primary metabolism.</title>
        <authorList>
            <person name="Wipat A."/>
            <person name="Carter N."/>
            <person name="Brignell C.S."/>
            <person name="Guy J.B."/>
            <person name="Piper K."/>
            <person name="Sanders J."/>
            <person name="Emmerson P.T."/>
            <person name="Harwood C.R."/>
        </authorList>
    </citation>
    <scope>NUCLEOTIDE SEQUENCE [GENOMIC DNA]</scope>
    <source>
        <strain>168</strain>
    </source>
</reference>
<reference key="3">
    <citation type="journal article" date="1997" name="Nature">
        <title>The complete genome sequence of the Gram-positive bacterium Bacillus subtilis.</title>
        <authorList>
            <person name="Kunst F."/>
            <person name="Ogasawara N."/>
            <person name="Moszer I."/>
            <person name="Albertini A.M."/>
            <person name="Alloni G."/>
            <person name="Azevedo V."/>
            <person name="Bertero M.G."/>
            <person name="Bessieres P."/>
            <person name="Bolotin A."/>
            <person name="Borchert S."/>
            <person name="Borriss R."/>
            <person name="Boursier L."/>
            <person name="Brans A."/>
            <person name="Braun M."/>
            <person name="Brignell S.C."/>
            <person name="Bron S."/>
            <person name="Brouillet S."/>
            <person name="Bruschi C.V."/>
            <person name="Caldwell B."/>
            <person name="Capuano V."/>
            <person name="Carter N.M."/>
            <person name="Choi S.-K."/>
            <person name="Codani J.-J."/>
            <person name="Connerton I.F."/>
            <person name="Cummings N.J."/>
            <person name="Daniel R.A."/>
            <person name="Denizot F."/>
            <person name="Devine K.M."/>
            <person name="Duesterhoeft A."/>
            <person name="Ehrlich S.D."/>
            <person name="Emmerson P.T."/>
            <person name="Entian K.-D."/>
            <person name="Errington J."/>
            <person name="Fabret C."/>
            <person name="Ferrari E."/>
            <person name="Foulger D."/>
            <person name="Fritz C."/>
            <person name="Fujita M."/>
            <person name="Fujita Y."/>
            <person name="Fuma S."/>
            <person name="Galizzi A."/>
            <person name="Galleron N."/>
            <person name="Ghim S.-Y."/>
            <person name="Glaser P."/>
            <person name="Goffeau A."/>
            <person name="Golightly E.J."/>
            <person name="Grandi G."/>
            <person name="Guiseppi G."/>
            <person name="Guy B.J."/>
            <person name="Haga K."/>
            <person name="Haiech J."/>
            <person name="Harwood C.R."/>
            <person name="Henaut A."/>
            <person name="Hilbert H."/>
            <person name="Holsappel S."/>
            <person name="Hosono S."/>
            <person name="Hullo M.-F."/>
            <person name="Itaya M."/>
            <person name="Jones L.-M."/>
            <person name="Joris B."/>
            <person name="Karamata D."/>
            <person name="Kasahara Y."/>
            <person name="Klaerr-Blanchard M."/>
            <person name="Klein C."/>
            <person name="Kobayashi Y."/>
            <person name="Koetter P."/>
            <person name="Koningstein G."/>
            <person name="Krogh S."/>
            <person name="Kumano M."/>
            <person name="Kurita K."/>
            <person name="Lapidus A."/>
            <person name="Lardinois S."/>
            <person name="Lauber J."/>
            <person name="Lazarevic V."/>
            <person name="Lee S.-M."/>
            <person name="Levine A."/>
            <person name="Liu H."/>
            <person name="Masuda S."/>
            <person name="Mauel C."/>
            <person name="Medigue C."/>
            <person name="Medina N."/>
            <person name="Mellado R.P."/>
            <person name="Mizuno M."/>
            <person name="Moestl D."/>
            <person name="Nakai S."/>
            <person name="Noback M."/>
            <person name="Noone D."/>
            <person name="O'Reilly M."/>
            <person name="Ogawa K."/>
            <person name="Ogiwara A."/>
            <person name="Oudega B."/>
            <person name="Park S.-H."/>
            <person name="Parro V."/>
            <person name="Pohl T.M."/>
            <person name="Portetelle D."/>
            <person name="Porwollik S."/>
            <person name="Prescott A.M."/>
            <person name="Presecan E."/>
            <person name="Pujic P."/>
            <person name="Purnelle B."/>
            <person name="Rapoport G."/>
            <person name="Rey M."/>
            <person name="Reynolds S."/>
            <person name="Rieger M."/>
            <person name="Rivolta C."/>
            <person name="Rocha E."/>
            <person name="Roche B."/>
            <person name="Rose M."/>
            <person name="Sadaie Y."/>
            <person name="Sato T."/>
            <person name="Scanlan E."/>
            <person name="Schleich S."/>
            <person name="Schroeter R."/>
            <person name="Scoffone F."/>
            <person name="Sekiguchi J."/>
            <person name="Sekowska A."/>
            <person name="Seror S.J."/>
            <person name="Serror P."/>
            <person name="Shin B.-S."/>
            <person name="Soldo B."/>
            <person name="Sorokin A."/>
            <person name="Tacconi E."/>
            <person name="Takagi T."/>
            <person name="Takahashi H."/>
            <person name="Takemaru K."/>
            <person name="Takeuchi M."/>
            <person name="Tamakoshi A."/>
            <person name="Tanaka T."/>
            <person name="Terpstra P."/>
            <person name="Tognoni A."/>
            <person name="Tosato V."/>
            <person name="Uchiyama S."/>
            <person name="Vandenbol M."/>
            <person name="Vannier F."/>
            <person name="Vassarotti A."/>
            <person name="Viari A."/>
            <person name="Wambutt R."/>
            <person name="Wedler E."/>
            <person name="Wedler H."/>
            <person name="Weitzenegger T."/>
            <person name="Winters P."/>
            <person name="Wipat A."/>
            <person name="Yamamoto H."/>
            <person name="Yamane K."/>
            <person name="Yasumoto K."/>
            <person name="Yata K."/>
            <person name="Yoshida K."/>
            <person name="Yoshikawa H.-F."/>
            <person name="Zumstein E."/>
            <person name="Yoshikawa H."/>
            <person name="Danchin A."/>
        </authorList>
    </citation>
    <scope>NUCLEOTIDE SEQUENCE [LARGE SCALE GENOMIC DNA]</scope>
    <source>
        <strain>168</strain>
    </source>
</reference>
<reference key="4">
    <citation type="submission" date="1997-02" db="EMBL/GenBank/DDBJ databases">
        <authorList>
            <person name="Zouari N."/>
            <person name="Roche B."/>
            <person name="Seegers J.F.M.L."/>
            <person name="Seror S.J."/>
        </authorList>
    </citation>
    <scope>NUCLEOTIDE SEQUENCE [GENOMIC DNA] OF 217-408</scope>
</reference>
<reference key="5">
    <citation type="journal article" date="1997" name="Microbiology">
        <title>Identification of vegetative proteins for a two-dimensional protein index of Bacillus subtilis.</title>
        <authorList>
            <person name="Schmid R."/>
            <person name="Bernhardt J."/>
            <person name="Antelmann H."/>
            <person name="Voelker U."/>
            <person name="Mach H."/>
            <person name="Voelker A."/>
            <person name="Hecker M."/>
        </authorList>
    </citation>
    <scope>PROTEIN SEQUENCE OF 2-25</scope>
    <source>
        <strain>168 / IS58</strain>
    </source>
</reference>
<sequence>MSVKWEKQEGNEGVLTVEVDAETFKTALDDAFKKVVKQVSIPGFRKGKIPRGLFEQRFGVEALYQDALDILLPVEYPKAVEEAGIEPVDRPEIDVEKIEKGESLIFTAKVTVKPEVKLGEYKGLGIEKDDTTVTDEDVQNELKALQERQAELVVKEEGAVEEGNTVVLDFEGFVDGEAFEGGKAENYSLEVGSGSFIPGFEDQLVGLEAGAEKDVEVTFPEEYHAEDLAGKPAVFKVKIHEIKAKELPELDDEFAKDIDEEVETLAELTEKTKKRLEEAKENEADAKLREELVLKASENAEIDVPQAMVDTELDRMLKEFEQRLQMQGMNLELYTQFSGQDEAALKEQMKEDAEKRVKSNLTLEAIAKAENLEVSDEEVDAELTKMAEAYNMPVENIKQAIGSTDAMKEDLKVRKAIDFLVENR</sequence>
<dbReference type="EC" id="5.2.1.8"/>
<dbReference type="EMBL" id="Z75208">
    <property type="protein sequence ID" value="CAA99536.1"/>
    <property type="molecule type" value="Genomic_DNA"/>
</dbReference>
<dbReference type="EMBL" id="Y09608">
    <property type="protein sequence ID" value="CAA70821.1"/>
    <property type="molecule type" value="mRNA"/>
</dbReference>
<dbReference type="EMBL" id="AL009126">
    <property type="protein sequence ID" value="CAB14783.1"/>
    <property type="molecule type" value="Genomic_DNA"/>
</dbReference>
<dbReference type="PIR" id="F69723">
    <property type="entry name" value="F69723"/>
</dbReference>
<dbReference type="RefSeq" id="NP_390701.1">
    <property type="nucleotide sequence ID" value="NC_000964.3"/>
</dbReference>
<dbReference type="RefSeq" id="WP_003229611.1">
    <property type="nucleotide sequence ID" value="NZ_OZ025638.1"/>
</dbReference>
<dbReference type="SMR" id="P80698"/>
<dbReference type="FunCoup" id="P80698">
    <property type="interactions" value="749"/>
</dbReference>
<dbReference type="IntAct" id="P80698">
    <property type="interactions" value="1"/>
</dbReference>
<dbReference type="MINT" id="P80698"/>
<dbReference type="STRING" id="224308.BSU28230"/>
<dbReference type="jPOST" id="P80698"/>
<dbReference type="PaxDb" id="224308-BSU28230"/>
<dbReference type="EnsemblBacteria" id="CAB14783">
    <property type="protein sequence ID" value="CAB14783"/>
    <property type="gene ID" value="BSU_28230"/>
</dbReference>
<dbReference type="GeneID" id="936610"/>
<dbReference type="KEGG" id="bsu:BSU28230"/>
<dbReference type="PATRIC" id="fig|224308.179.peg.3066"/>
<dbReference type="eggNOG" id="COG0544">
    <property type="taxonomic scope" value="Bacteria"/>
</dbReference>
<dbReference type="InParanoid" id="P80698"/>
<dbReference type="OrthoDB" id="9767721at2"/>
<dbReference type="PhylomeDB" id="P80698"/>
<dbReference type="BioCyc" id="BSUB:BSU28230-MONOMER"/>
<dbReference type="Proteomes" id="UP000001570">
    <property type="component" value="Chromosome"/>
</dbReference>
<dbReference type="GO" id="GO:0005737">
    <property type="term" value="C:cytoplasm"/>
    <property type="evidence" value="ECO:0007669"/>
    <property type="project" value="UniProtKB-SubCell"/>
</dbReference>
<dbReference type="GO" id="GO:0003755">
    <property type="term" value="F:peptidyl-prolyl cis-trans isomerase activity"/>
    <property type="evidence" value="ECO:0000318"/>
    <property type="project" value="GO_Central"/>
</dbReference>
<dbReference type="GO" id="GO:0044183">
    <property type="term" value="F:protein folding chaperone"/>
    <property type="evidence" value="ECO:0000318"/>
    <property type="project" value="GO_Central"/>
</dbReference>
<dbReference type="GO" id="GO:0043022">
    <property type="term" value="F:ribosome binding"/>
    <property type="evidence" value="ECO:0000318"/>
    <property type="project" value="GO_Central"/>
</dbReference>
<dbReference type="GO" id="GO:0051083">
    <property type="term" value="P:'de novo' cotranslational protein folding"/>
    <property type="evidence" value="ECO:0000318"/>
    <property type="project" value="GO_Central"/>
</dbReference>
<dbReference type="GO" id="GO:0051301">
    <property type="term" value="P:cell division"/>
    <property type="evidence" value="ECO:0007669"/>
    <property type="project" value="UniProtKB-KW"/>
</dbReference>
<dbReference type="GO" id="GO:0061077">
    <property type="term" value="P:chaperone-mediated protein folding"/>
    <property type="evidence" value="ECO:0000318"/>
    <property type="project" value="GO_Central"/>
</dbReference>
<dbReference type="GO" id="GO:0015031">
    <property type="term" value="P:protein transport"/>
    <property type="evidence" value="ECO:0007669"/>
    <property type="project" value="UniProtKB-UniRule"/>
</dbReference>
<dbReference type="GO" id="GO:0043335">
    <property type="term" value="P:protein unfolding"/>
    <property type="evidence" value="ECO:0000318"/>
    <property type="project" value="GO_Central"/>
</dbReference>
<dbReference type="FunFam" id="3.10.50.40:FF:000001">
    <property type="entry name" value="Trigger factor"/>
    <property type="match status" value="1"/>
</dbReference>
<dbReference type="FunFam" id="3.30.70.1050:FF:000002">
    <property type="entry name" value="Trigger factor"/>
    <property type="match status" value="1"/>
</dbReference>
<dbReference type="Gene3D" id="3.10.50.40">
    <property type="match status" value="1"/>
</dbReference>
<dbReference type="Gene3D" id="3.30.70.1050">
    <property type="entry name" value="Trigger factor ribosome-binding domain"/>
    <property type="match status" value="1"/>
</dbReference>
<dbReference type="Gene3D" id="1.10.3120.10">
    <property type="entry name" value="Trigger factor, C-terminal domain"/>
    <property type="match status" value="1"/>
</dbReference>
<dbReference type="HAMAP" id="MF_00303">
    <property type="entry name" value="Trigger_factor_Tig"/>
    <property type="match status" value="1"/>
</dbReference>
<dbReference type="InterPro" id="IPR046357">
    <property type="entry name" value="PPIase_dom_sf"/>
</dbReference>
<dbReference type="InterPro" id="IPR001179">
    <property type="entry name" value="PPIase_FKBP_dom"/>
</dbReference>
<dbReference type="InterPro" id="IPR005215">
    <property type="entry name" value="Trig_fac"/>
</dbReference>
<dbReference type="InterPro" id="IPR008880">
    <property type="entry name" value="Trigger_fac_C"/>
</dbReference>
<dbReference type="InterPro" id="IPR037041">
    <property type="entry name" value="Trigger_fac_C_sf"/>
</dbReference>
<dbReference type="InterPro" id="IPR008881">
    <property type="entry name" value="Trigger_fac_ribosome-bd_bac"/>
</dbReference>
<dbReference type="InterPro" id="IPR036611">
    <property type="entry name" value="Trigger_fac_ribosome-bd_sf"/>
</dbReference>
<dbReference type="InterPro" id="IPR027304">
    <property type="entry name" value="Trigger_fact/SurA_dom_sf"/>
</dbReference>
<dbReference type="NCBIfam" id="TIGR00115">
    <property type="entry name" value="tig"/>
    <property type="match status" value="1"/>
</dbReference>
<dbReference type="PANTHER" id="PTHR30560">
    <property type="entry name" value="TRIGGER FACTOR CHAPERONE AND PEPTIDYL-PROLYL CIS/TRANS ISOMERASE"/>
    <property type="match status" value="1"/>
</dbReference>
<dbReference type="PANTHER" id="PTHR30560:SF3">
    <property type="entry name" value="TRIGGER FACTOR-LIKE PROTEIN TIG, CHLOROPLASTIC"/>
    <property type="match status" value="1"/>
</dbReference>
<dbReference type="Pfam" id="PF00254">
    <property type="entry name" value="FKBP_C"/>
    <property type="match status" value="1"/>
</dbReference>
<dbReference type="Pfam" id="PF05698">
    <property type="entry name" value="Trigger_C"/>
    <property type="match status" value="1"/>
</dbReference>
<dbReference type="Pfam" id="PF05697">
    <property type="entry name" value="Trigger_N"/>
    <property type="match status" value="1"/>
</dbReference>
<dbReference type="PIRSF" id="PIRSF003095">
    <property type="entry name" value="Trigger_factor"/>
    <property type="match status" value="1"/>
</dbReference>
<dbReference type="SUPFAM" id="SSF54534">
    <property type="entry name" value="FKBP-like"/>
    <property type="match status" value="1"/>
</dbReference>
<dbReference type="SUPFAM" id="SSF109998">
    <property type="entry name" value="Triger factor/SurA peptide-binding domain-like"/>
    <property type="match status" value="1"/>
</dbReference>
<dbReference type="SUPFAM" id="SSF102735">
    <property type="entry name" value="Trigger factor ribosome-binding domain"/>
    <property type="match status" value="1"/>
</dbReference>
<dbReference type="PROSITE" id="PS50059">
    <property type="entry name" value="FKBP_PPIASE"/>
    <property type="match status" value="1"/>
</dbReference>
<comment type="function">
    <text evidence="1">Involved in protein export. Acts as a chaperone by maintaining the newly synthesized protein in an open conformation. Functions as a peptidyl-prolyl cis-trans isomerase (By similarity).</text>
</comment>
<comment type="catalytic activity">
    <reaction>
        <text>[protein]-peptidylproline (omega=180) = [protein]-peptidylproline (omega=0)</text>
        <dbReference type="Rhea" id="RHEA:16237"/>
        <dbReference type="Rhea" id="RHEA-COMP:10747"/>
        <dbReference type="Rhea" id="RHEA-COMP:10748"/>
        <dbReference type="ChEBI" id="CHEBI:83833"/>
        <dbReference type="ChEBI" id="CHEBI:83834"/>
        <dbReference type="EC" id="5.2.1.8"/>
    </reaction>
</comment>
<comment type="subcellular location">
    <subcellularLocation>
        <location>Cytoplasm</location>
    </subcellularLocation>
    <text evidence="1">About half TF is bound to the ribosome near the polypeptide exit tunnel while the other half is free in the cytoplasm.</text>
</comment>
<comment type="domain">
    <text evidence="1">Consists of 3 domains; the N-terminus binds the ribosome, the middle domain has PPIase activity, while the C-terminus has intrinsic chaperone activity on its own.</text>
</comment>
<comment type="similarity">
    <text evidence="3">Belongs to the FKBP-type PPIase family. Tig subfamily.</text>
</comment>
<gene>
    <name type="primary">tig</name>
    <name type="synonym">yzzH</name>
    <name type="ordered locus">BSU28230</name>
</gene>
<feature type="initiator methionine" description="Removed" evidence="2">
    <location>
        <position position="1"/>
    </location>
</feature>
<feature type="chain" id="PRO_0000179313" description="Trigger factor">
    <location>
        <begin position="2"/>
        <end position="424"/>
    </location>
</feature>
<feature type="domain" description="PPIase FKBP-type">
    <location>
        <begin position="163"/>
        <end position="248"/>
    </location>
</feature>
<organism>
    <name type="scientific">Bacillus subtilis (strain 168)</name>
    <dbReference type="NCBI Taxonomy" id="224308"/>
    <lineage>
        <taxon>Bacteria</taxon>
        <taxon>Bacillati</taxon>
        <taxon>Bacillota</taxon>
        <taxon>Bacilli</taxon>
        <taxon>Bacillales</taxon>
        <taxon>Bacillaceae</taxon>
        <taxon>Bacillus</taxon>
    </lineage>
</organism>
<name>TIG_BACSU</name>
<evidence type="ECO:0000250" key="1"/>
<evidence type="ECO:0000269" key="2">
    <source>
    </source>
</evidence>
<evidence type="ECO:0000305" key="3"/>